<evidence type="ECO:0000255" key="1">
    <source>
        <dbReference type="HAMAP-Rule" id="MF_00098"/>
    </source>
</evidence>
<feature type="chain" id="PRO_0000139198" description="Methionine--tRNA ligase">
    <location>
        <begin position="1"/>
        <end position="741"/>
    </location>
</feature>
<feature type="domain" description="tRNA-binding" evidence="1">
    <location>
        <begin position="641"/>
        <end position="741"/>
    </location>
</feature>
<feature type="short sequence motif" description="'HIGH' region">
    <location>
        <begin position="11"/>
        <end position="21"/>
    </location>
</feature>
<feature type="short sequence motif" description="'KMSKS' region">
    <location>
        <begin position="345"/>
        <end position="349"/>
    </location>
</feature>
<feature type="binding site" evidence="1">
    <location>
        <position position="143"/>
    </location>
    <ligand>
        <name>Zn(2+)</name>
        <dbReference type="ChEBI" id="CHEBI:29105"/>
    </ligand>
</feature>
<feature type="binding site" evidence="1">
    <location>
        <position position="146"/>
    </location>
    <ligand>
        <name>Zn(2+)</name>
        <dbReference type="ChEBI" id="CHEBI:29105"/>
    </ligand>
</feature>
<feature type="binding site" evidence="1">
    <location>
        <position position="156"/>
    </location>
    <ligand>
        <name>Zn(2+)</name>
        <dbReference type="ChEBI" id="CHEBI:29105"/>
    </ligand>
</feature>
<feature type="binding site" evidence="1">
    <location>
        <position position="159"/>
    </location>
    <ligand>
        <name>Zn(2+)</name>
        <dbReference type="ChEBI" id="CHEBI:29105"/>
    </ligand>
</feature>
<feature type="binding site" evidence="1">
    <location>
        <position position="348"/>
    </location>
    <ligand>
        <name>ATP</name>
        <dbReference type="ChEBI" id="CHEBI:30616"/>
    </ligand>
</feature>
<dbReference type="EC" id="6.1.1.10" evidence="1"/>
<dbReference type="EMBL" id="AP006878">
    <property type="protein sequence ID" value="BAD85238.1"/>
    <property type="molecule type" value="Genomic_DNA"/>
</dbReference>
<dbReference type="RefSeq" id="WP_011250000.1">
    <property type="nucleotide sequence ID" value="NC_006624.1"/>
</dbReference>
<dbReference type="SMR" id="Q5JDZ7"/>
<dbReference type="FunCoup" id="Q5JDZ7">
    <property type="interactions" value="228"/>
</dbReference>
<dbReference type="IntAct" id="Q5JDZ7">
    <property type="interactions" value="1"/>
</dbReference>
<dbReference type="MINT" id="Q5JDZ7"/>
<dbReference type="STRING" id="69014.TK1049"/>
<dbReference type="EnsemblBacteria" id="BAD85238">
    <property type="protein sequence ID" value="BAD85238"/>
    <property type="gene ID" value="TK1049"/>
</dbReference>
<dbReference type="GeneID" id="78447562"/>
<dbReference type="KEGG" id="tko:TK1049"/>
<dbReference type="PATRIC" id="fig|69014.16.peg.1026"/>
<dbReference type="eggNOG" id="arCOG00810">
    <property type="taxonomic scope" value="Archaea"/>
</dbReference>
<dbReference type="HOGENOM" id="CLU_009710_1_2_2"/>
<dbReference type="InParanoid" id="Q5JDZ7"/>
<dbReference type="OrthoDB" id="371856at2157"/>
<dbReference type="PhylomeDB" id="Q5JDZ7"/>
<dbReference type="Proteomes" id="UP000000536">
    <property type="component" value="Chromosome"/>
</dbReference>
<dbReference type="GO" id="GO:0005829">
    <property type="term" value="C:cytosol"/>
    <property type="evidence" value="ECO:0000318"/>
    <property type="project" value="GO_Central"/>
</dbReference>
<dbReference type="GO" id="GO:0005524">
    <property type="term" value="F:ATP binding"/>
    <property type="evidence" value="ECO:0007669"/>
    <property type="project" value="UniProtKB-UniRule"/>
</dbReference>
<dbReference type="GO" id="GO:0046872">
    <property type="term" value="F:metal ion binding"/>
    <property type="evidence" value="ECO:0007669"/>
    <property type="project" value="UniProtKB-KW"/>
</dbReference>
<dbReference type="GO" id="GO:0004825">
    <property type="term" value="F:methionine-tRNA ligase activity"/>
    <property type="evidence" value="ECO:0000318"/>
    <property type="project" value="GO_Central"/>
</dbReference>
<dbReference type="GO" id="GO:0000049">
    <property type="term" value="F:tRNA binding"/>
    <property type="evidence" value="ECO:0007669"/>
    <property type="project" value="UniProtKB-KW"/>
</dbReference>
<dbReference type="GO" id="GO:0006431">
    <property type="term" value="P:methionyl-tRNA aminoacylation"/>
    <property type="evidence" value="ECO:0000318"/>
    <property type="project" value="GO_Central"/>
</dbReference>
<dbReference type="CDD" id="cd07957">
    <property type="entry name" value="Anticodon_Ia_Met"/>
    <property type="match status" value="1"/>
</dbReference>
<dbReference type="CDD" id="cd00814">
    <property type="entry name" value="MetRS_core"/>
    <property type="match status" value="1"/>
</dbReference>
<dbReference type="CDD" id="cd02800">
    <property type="entry name" value="tRNA_bind_EcMetRS_like"/>
    <property type="match status" value="1"/>
</dbReference>
<dbReference type="FunFam" id="2.20.28.20:FF:000001">
    <property type="entry name" value="Methionine--tRNA ligase"/>
    <property type="match status" value="1"/>
</dbReference>
<dbReference type="FunFam" id="2.40.50.140:FF:000042">
    <property type="entry name" value="Methionine--tRNA ligase"/>
    <property type="match status" value="1"/>
</dbReference>
<dbReference type="Gene3D" id="3.40.50.620">
    <property type="entry name" value="HUPs"/>
    <property type="match status" value="1"/>
</dbReference>
<dbReference type="Gene3D" id="1.10.730.10">
    <property type="entry name" value="Isoleucyl-tRNA Synthetase, Domain 1"/>
    <property type="match status" value="1"/>
</dbReference>
<dbReference type="Gene3D" id="2.20.28.20">
    <property type="entry name" value="Methionyl-tRNA synthetase, Zn-domain"/>
    <property type="match status" value="1"/>
</dbReference>
<dbReference type="Gene3D" id="2.40.50.140">
    <property type="entry name" value="Nucleic acid-binding proteins"/>
    <property type="match status" value="1"/>
</dbReference>
<dbReference type="HAMAP" id="MF_00098">
    <property type="entry name" value="Met_tRNA_synth_type1"/>
    <property type="match status" value="1"/>
</dbReference>
<dbReference type="InterPro" id="IPR001412">
    <property type="entry name" value="aa-tRNA-synth_I_CS"/>
</dbReference>
<dbReference type="InterPro" id="IPR041872">
    <property type="entry name" value="Anticodon_Met"/>
</dbReference>
<dbReference type="InterPro" id="IPR004495">
    <property type="entry name" value="Met-tRNA-synth_bsu_C"/>
</dbReference>
<dbReference type="InterPro" id="IPR023458">
    <property type="entry name" value="Met-tRNA_ligase_1"/>
</dbReference>
<dbReference type="InterPro" id="IPR014758">
    <property type="entry name" value="Met-tRNA_synth"/>
</dbReference>
<dbReference type="InterPro" id="IPR015413">
    <property type="entry name" value="Methionyl/Leucyl_tRNA_Synth"/>
</dbReference>
<dbReference type="InterPro" id="IPR033911">
    <property type="entry name" value="MetRS_core"/>
</dbReference>
<dbReference type="InterPro" id="IPR029038">
    <property type="entry name" value="MetRS_Zn"/>
</dbReference>
<dbReference type="InterPro" id="IPR012340">
    <property type="entry name" value="NA-bd_OB-fold"/>
</dbReference>
<dbReference type="InterPro" id="IPR014729">
    <property type="entry name" value="Rossmann-like_a/b/a_fold"/>
</dbReference>
<dbReference type="InterPro" id="IPR002547">
    <property type="entry name" value="tRNA-bd_dom"/>
</dbReference>
<dbReference type="InterPro" id="IPR009080">
    <property type="entry name" value="tRNAsynth_Ia_anticodon-bd"/>
</dbReference>
<dbReference type="NCBIfam" id="TIGR00398">
    <property type="entry name" value="metG"/>
    <property type="match status" value="1"/>
</dbReference>
<dbReference type="NCBIfam" id="TIGR00399">
    <property type="entry name" value="metG_C_term"/>
    <property type="match status" value="1"/>
</dbReference>
<dbReference type="NCBIfam" id="NF001100">
    <property type="entry name" value="PRK00133.1"/>
    <property type="match status" value="1"/>
</dbReference>
<dbReference type="PANTHER" id="PTHR45765">
    <property type="entry name" value="METHIONINE--TRNA LIGASE"/>
    <property type="match status" value="1"/>
</dbReference>
<dbReference type="PANTHER" id="PTHR45765:SF1">
    <property type="entry name" value="METHIONINE--TRNA LIGASE, CYTOPLASMIC"/>
    <property type="match status" value="1"/>
</dbReference>
<dbReference type="Pfam" id="PF19303">
    <property type="entry name" value="Anticodon_3"/>
    <property type="match status" value="1"/>
</dbReference>
<dbReference type="Pfam" id="PF09334">
    <property type="entry name" value="tRNA-synt_1g"/>
    <property type="match status" value="1"/>
</dbReference>
<dbReference type="Pfam" id="PF01588">
    <property type="entry name" value="tRNA_bind"/>
    <property type="match status" value="1"/>
</dbReference>
<dbReference type="PRINTS" id="PR01041">
    <property type="entry name" value="TRNASYNTHMET"/>
</dbReference>
<dbReference type="SUPFAM" id="SSF47323">
    <property type="entry name" value="Anticodon-binding domain of a subclass of class I aminoacyl-tRNA synthetases"/>
    <property type="match status" value="1"/>
</dbReference>
<dbReference type="SUPFAM" id="SSF57770">
    <property type="entry name" value="Methionyl-tRNA synthetase (MetRS), Zn-domain"/>
    <property type="match status" value="1"/>
</dbReference>
<dbReference type="SUPFAM" id="SSF50249">
    <property type="entry name" value="Nucleic acid-binding proteins"/>
    <property type="match status" value="1"/>
</dbReference>
<dbReference type="SUPFAM" id="SSF52374">
    <property type="entry name" value="Nucleotidylyl transferase"/>
    <property type="match status" value="1"/>
</dbReference>
<dbReference type="PROSITE" id="PS00178">
    <property type="entry name" value="AA_TRNA_LIGASE_I"/>
    <property type="match status" value="1"/>
</dbReference>
<dbReference type="PROSITE" id="PS50886">
    <property type="entry name" value="TRBD"/>
    <property type="match status" value="1"/>
</dbReference>
<reference key="1">
    <citation type="journal article" date="2005" name="Genome Res.">
        <title>Complete genome sequence of the hyperthermophilic archaeon Thermococcus kodakaraensis KOD1 and comparison with Pyrococcus genomes.</title>
        <authorList>
            <person name="Fukui T."/>
            <person name="Atomi H."/>
            <person name="Kanai T."/>
            <person name="Matsumi R."/>
            <person name="Fujiwara S."/>
            <person name="Imanaka T."/>
        </authorList>
    </citation>
    <scope>NUCLEOTIDE SEQUENCE [LARGE SCALE GENOMIC DNA]</scope>
    <source>
        <strain>ATCC BAA-918 / JCM 12380 / KOD1</strain>
    </source>
</reference>
<organism>
    <name type="scientific">Thermococcus kodakarensis (strain ATCC BAA-918 / JCM 12380 / KOD1)</name>
    <name type="common">Pyrococcus kodakaraensis (strain KOD1)</name>
    <dbReference type="NCBI Taxonomy" id="69014"/>
    <lineage>
        <taxon>Archaea</taxon>
        <taxon>Methanobacteriati</taxon>
        <taxon>Methanobacteriota</taxon>
        <taxon>Thermococci</taxon>
        <taxon>Thermococcales</taxon>
        <taxon>Thermococcaceae</taxon>
        <taxon>Thermococcus</taxon>
    </lineage>
</organism>
<gene>
    <name evidence="1" type="primary">metG</name>
    <name type="ordered locus">TK1049</name>
</gene>
<protein>
    <recommendedName>
        <fullName evidence="1">Methionine--tRNA ligase</fullName>
        <ecNumber evidence="1">6.1.1.10</ecNumber>
    </recommendedName>
    <alternativeName>
        <fullName evidence="1">Methionyl-tRNA synthetase</fullName>
        <shortName evidence="1">MetRS</shortName>
    </alternativeName>
</protein>
<name>SYM_THEKO</name>
<comment type="function">
    <text evidence="1">Is required not only for elongation of protein synthesis but also for the initiation of all mRNA translation through initiator tRNA(fMet) aminoacylation.</text>
</comment>
<comment type="catalytic activity">
    <reaction evidence="1">
        <text>tRNA(Met) + L-methionine + ATP = L-methionyl-tRNA(Met) + AMP + diphosphate</text>
        <dbReference type="Rhea" id="RHEA:13481"/>
        <dbReference type="Rhea" id="RHEA-COMP:9667"/>
        <dbReference type="Rhea" id="RHEA-COMP:9698"/>
        <dbReference type="ChEBI" id="CHEBI:30616"/>
        <dbReference type="ChEBI" id="CHEBI:33019"/>
        <dbReference type="ChEBI" id="CHEBI:57844"/>
        <dbReference type="ChEBI" id="CHEBI:78442"/>
        <dbReference type="ChEBI" id="CHEBI:78530"/>
        <dbReference type="ChEBI" id="CHEBI:456215"/>
        <dbReference type="EC" id="6.1.1.10"/>
    </reaction>
</comment>
<comment type="cofactor">
    <cofactor evidence="1">
        <name>Zn(2+)</name>
        <dbReference type="ChEBI" id="CHEBI:29105"/>
    </cofactor>
    <text evidence="1">Binds 1 zinc ion per subunit.</text>
</comment>
<comment type="subunit">
    <text evidence="1">Homodimer.</text>
</comment>
<comment type="subcellular location">
    <subcellularLocation>
        <location evidence="1">Cytoplasm</location>
    </subcellularLocation>
</comment>
<comment type="similarity">
    <text evidence="1">Belongs to the class-I aminoacyl-tRNA synthetase family. MetG type 1 subfamily.</text>
</comment>
<accession>Q5JDZ7</accession>
<keyword id="KW-0030">Aminoacyl-tRNA synthetase</keyword>
<keyword id="KW-0067">ATP-binding</keyword>
<keyword id="KW-0963">Cytoplasm</keyword>
<keyword id="KW-0436">Ligase</keyword>
<keyword id="KW-0479">Metal-binding</keyword>
<keyword id="KW-0547">Nucleotide-binding</keyword>
<keyword id="KW-0648">Protein biosynthesis</keyword>
<keyword id="KW-1185">Reference proteome</keyword>
<keyword id="KW-0694">RNA-binding</keyword>
<keyword id="KW-0820">tRNA-binding</keyword>
<keyword id="KW-0862">Zinc</keyword>
<proteinExistence type="inferred from homology"/>
<sequence length="741" mass="86371">MVRYMVTSALPYANGPIHAGHLAGAYLPADIFVRYLRLKGEEVLFICGTDEHGTPITFRALKEGRSPREIVDEFHEHIKTTFERAKISFDFFGRTELPVHYRLSQEFFLKALENGHLVKKVTKQAYCEHDKMFLPDRYVIGTCPYCGAENQRGDQCEVCGHPLTPEILINPRCNICGNPITFKDSAHYYIRMQDFEERLKKWVESQEHWKPNVRNTVLGWINEGLEERAITRDLDWGIPVPLDDEDVKGKVLYVWFEAPIGYISITIEHLKREGKENEWKKFWLNLDGETKVIHFIGKDNIPFHAIFWPAFLMAYGKYRDEEVEAEWNLPYDIPANEYLNLEGKKFSTSRNWAIWVHEFLDVWPADYLRYYLTAIMPETRDSDFSFEDFKKKINEELVNNLGNFVHRAMTFVNRYFDGVVPERGELNDLDRQALEEIEKAFKETGELISNYRFKDALKRVMELAIFGNRYFDYQKPWKTAKENRERTATTVNVSLQIVKALGILLEPFLPDASEKIWHLLNLEEVKKWSFEELPAGHRVRKAFPMFRKVTDGEIIYFIVNYIGRGNPDSAKILLNKYYKQEDVVKVTLERFGEKRKDEALALLKSIYGDEFKGEKPEKAGKAEKKEKVKEGKKMEYVSFDEFAKLDLRVGKIIEVNDHPNADRLYVVKVDLGDEVRQLVAGLKKYYKPEELLGHYVVIIANLEPKKLRGVESQGMLLAADDGERVALLMPDKEVKLGARIR</sequence>